<reference key="1">
    <citation type="journal article" date="2003" name="Proc. Natl. Acad. Sci. U.S.A.">
        <title>The complete genome sequence of Mycobacterium bovis.</title>
        <authorList>
            <person name="Garnier T."/>
            <person name="Eiglmeier K."/>
            <person name="Camus J.-C."/>
            <person name="Medina N."/>
            <person name="Mansoor H."/>
            <person name="Pryor M."/>
            <person name="Duthoy S."/>
            <person name="Grondin S."/>
            <person name="Lacroix C."/>
            <person name="Monsempe C."/>
            <person name="Simon S."/>
            <person name="Harris B."/>
            <person name="Atkin R."/>
            <person name="Doggett J."/>
            <person name="Mayes R."/>
            <person name="Keating L."/>
            <person name="Wheeler P.R."/>
            <person name="Parkhill J."/>
            <person name="Barrell B.G."/>
            <person name="Cole S.T."/>
            <person name="Gordon S.V."/>
            <person name="Hewinson R.G."/>
        </authorList>
    </citation>
    <scope>NUCLEOTIDE SEQUENCE [LARGE SCALE GENOMIC DNA]</scope>
    <source>
        <strain>ATCC BAA-935 / AF2122/97</strain>
    </source>
</reference>
<reference key="2">
    <citation type="journal article" date="2017" name="Genome Announc.">
        <title>Updated reference genome sequence and annotation of Mycobacterium bovis AF2122/97.</title>
        <authorList>
            <person name="Malone K.M."/>
            <person name="Farrell D."/>
            <person name="Stuber T.P."/>
            <person name="Schubert O.T."/>
            <person name="Aebersold R."/>
            <person name="Robbe-Austerman S."/>
            <person name="Gordon S.V."/>
        </authorList>
    </citation>
    <scope>NUCLEOTIDE SEQUENCE [LARGE SCALE GENOMIC DNA]</scope>
    <scope>GENOME REANNOTATION</scope>
    <source>
        <strain>ATCC BAA-935 / AF2122/97</strain>
    </source>
</reference>
<feature type="chain" id="PRO_0000104099" description="Uncharacterized protein Mb2934c">
    <location>
        <begin position="1"/>
        <end position="147"/>
    </location>
</feature>
<name>Y2934_MYCBO</name>
<gene>
    <name type="ordered locus">BQ2027_MB2934C</name>
</gene>
<protein>
    <recommendedName>
        <fullName>Uncharacterized protein Mb2934c</fullName>
    </recommendedName>
</protein>
<dbReference type="EMBL" id="LT708304">
    <property type="protein sequence ID" value="SIU01555.1"/>
    <property type="molecule type" value="Genomic_DNA"/>
</dbReference>
<dbReference type="RefSeq" id="NP_856579.1">
    <property type="nucleotide sequence ID" value="NC_002945.3"/>
</dbReference>
<dbReference type="SMR" id="P65054"/>
<dbReference type="KEGG" id="mbo:BQ2027_MB2934C"/>
<dbReference type="PATRIC" id="fig|233413.5.peg.3220"/>
<dbReference type="Proteomes" id="UP000001419">
    <property type="component" value="Chromosome"/>
</dbReference>
<dbReference type="CDD" id="cd00531">
    <property type="entry name" value="NTF2_like"/>
    <property type="match status" value="1"/>
</dbReference>
<dbReference type="Gene3D" id="3.10.450.50">
    <property type="match status" value="1"/>
</dbReference>
<dbReference type="InterPro" id="IPR032710">
    <property type="entry name" value="NTF2-like_dom_sf"/>
</dbReference>
<dbReference type="InterPro" id="IPR037401">
    <property type="entry name" value="SnoaL-like"/>
</dbReference>
<dbReference type="Pfam" id="PF13577">
    <property type="entry name" value="SnoaL_4"/>
    <property type="match status" value="1"/>
</dbReference>
<dbReference type="SUPFAM" id="SSF54427">
    <property type="entry name" value="NTF2-like"/>
    <property type="match status" value="1"/>
</dbReference>
<sequence length="147" mass="17049">MCAVLDRSMLSVAEISDRLEIQQLLVDYSSAIDQRRFDDLDRVFTPDAYIDYRALGGIDGRYPKIKQWLSQVLGNFPVYAHMLGNFSVRVDGDTASSRVICFNPMVFAGDRQQVLFCGLWYDDDFVRTPDGWRIIRRVETKCFQKMM</sequence>
<keyword id="KW-1185">Reference proteome</keyword>
<accession>P65054</accession>
<accession>A0A1R3Y4K2</accession>
<accession>Q10827</accession>
<accession>X2BMR9</accession>
<proteinExistence type="predicted"/>
<organism>
    <name type="scientific">Mycobacterium bovis (strain ATCC BAA-935 / AF2122/97)</name>
    <dbReference type="NCBI Taxonomy" id="233413"/>
    <lineage>
        <taxon>Bacteria</taxon>
        <taxon>Bacillati</taxon>
        <taxon>Actinomycetota</taxon>
        <taxon>Actinomycetes</taxon>
        <taxon>Mycobacteriales</taxon>
        <taxon>Mycobacteriaceae</taxon>
        <taxon>Mycobacterium</taxon>
        <taxon>Mycobacterium tuberculosis complex</taxon>
    </lineage>
</organism>